<dbReference type="EMBL" id="CP000912">
    <property type="protein sequence ID" value="ABY39597.1"/>
    <property type="molecule type" value="Genomic_DNA"/>
</dbReference>
<dbReference type="RefSeq" id="WP_002966022.1">
    <property type="nucleotide sequence ID" value="NC_010167.1"/>
</dbReference>
<dbReference type="SMR" id="A9WYT1"/>
<dbReference type="KEGG" id="bmt:BSUIS_B0609"/>
<dbReference type="HOGENOM" id="CLU_000445_69_17_5"/>
<dbReference type="Proteomes" id="UP000008545">
    <property type="component" value="Chromosome II"/>
</dbReference>
<dbReference type="GO" id="GO:0005737">
    <property type="term" value="C:cytoplasm"/>
    <property type="evidence" value="ECO:0007669"/>
    <property type="project" value="UniProtKB-SubCell"/>
</dbReference>
<dbReference type="GO" id="GO:0003677">
    <property type="term" value="F:DNA binding"/>
    <property type="evidence" value="ECO:0007669"/>
    <property type="project" value="UniProtKB-KW"/>
</dbReference>
<dbReference type="GO" id="GO:0000160">
    <property type="term" value="P:phosphorelay signal transduction system"/>
    <property type="evidence" value="ECO:0007669"/>
    <property type="project" value="UniProtKB-KW"/>
</dbReference>
<dbReference type="CDD" id="cd17548">
    <property type="entry name" value="REC_DivK-like"/>
    <property type="match status" value="1"/>
</dbReference>
<dbReference type="Gene3D" id="3.40.50.2300">
    <property type="match status" value="1"/>
</dbReference>
<dbReference type="InterPro" id="IPR050595">
    <property type="entry name" value="Bact_response_regulator"/>
</dbReference>
<dbReference type="InterPro" id="IPR011006">
    <property type="entry name" value="CheY-like_superfamily"/>
</dbReference>
<dbReference type="InterPro" id="IPR001789">
    <property type="entry name" value="Sig_transdc_resp-reg_receiver"/>
</dbReference>
<dbReference type="PANTHER" id="PTHR44591:SF3">
    <property type="entry name" value="RESPONSE REGULATORY DOMAIN-CONTAINING PROTEIN"/>
    <property type="match status" value="1"/>
</dbReference>
<dbReference type="PANTHER" id="PTHR44591">
    <property type="entry name" value="STRESS RESPONSE REGULATOR PROTEIN 1"/>
    <property type="match status" value="1"/>
</dbReference>
<dbReference type="Pfam" id="PF00072">
    <property type="entry name" value="Response_reg"/>
    <property type="match status" value="1"/>
</dbReference>
<dbReference type="SMART" id="SM00448">
    <property type="entry name" value="REC"/>
    <property type="match status" value="1"/>
</dbReference>
<dbReference type="SUPFAM" id="SSF52172">
    <property type="entry name" value="CheY-like"/>
    <property type="match status" value="1"/>
</dbReference>
<dbReference type="PROSITE" id="PS50110">
    <property type="entry name" value="RESPONSE_REGULATORY"/>
    <property type="match status" value="1"/>
</dbReference>
<gene>
    <name type="primary">divK</name>
    <name type="ordered locus">BSUIS_B0609</name>
</gene>
<keyword id="KW-0963">Cytoplasm</keyword>
<keyword id="KW-0238">DNA-binding</keyword>
<keyword id="KW-0597">Phosphoprotein</keyword>
<keyword id="KW-0804">Transcription</keyword>
<keyword id="KW-0805">Transcription regulation</keyword>
<keyword id="KW-0902">Two-component regulatory system</keyword>
<feature type="chain" id="PRO_0000363210" description="Polar-differentiation response regulator DivK">
    <location>
        <begin position="1"/>
        <end position="123"/>
    </location>
</feature>
<feature type="domain" description="Response regulatory" evidence="2">
    <location>
        <begin position="4"/>
        <end position="120"/>
    </location>
</feature>
<feature type="modified residue" description="4-aspartylphosphate" evidence="2">
    <location>
        <position position="53"/>
    </location>
</feature>
<reference key="1">
    <citation type="submission" date="2007-12" db="EMBL/GenBank/DDBJ databases">
        <title>Brucella suis ATCC 23445 whole genome shotgun sequencing project.</title>
        <authorList>
            <person name="Setubal J.C."/>
            <person name="Bowns C."/>
            <person name="Boyle S."/>
            <person name="Crasta O.R."/>
            <person name="Czar M.J."/>
            <person name="Dharmanolla C."/>
            <person name="Gillespie J.J."/>
            <person name="Kenyon R.W."/>
            <person name="Lu J."/>
            <person name="Mane S."/>
            <person name="Mohapatra S."/>
            <person name="Nagrani S."/>
            <person name="Purkayastha A."/>
            <person name="Rajasimha H.K."/>
            <person name="Shallom J.M."/>
            <person name="Shallom S."/>
            <person name="Shukla M."/>
            <person name="Snyder E.E."/>
            <person name="Sobral B.W."/>
            <person name="Wattam A.R."/>
            <person name="Will R."/>
            <person name="Williams K."/>
            <person name="Yoo H."/>
            <person name="Bruce D."/>
            <person name="Detter C."/>
            <person name="Munk C."/>
            <person name="Brettin T.S."/>
        </authorList>
    </citation>
    <scope>NUCLEOTIDE SEQUENCE [LARGE SCALE GENOMIC DNA]</scope>
    <source>
        <strain>ATCC 23445 / NCTC 10510</strain>
    </source>
</reference>
<proteinExistence type="inferred from homology"/>
<protein>
    <recommendedName>
        <fullName>Polar-differentiation response regulator DivK</fullName>
    </recommendedName>
</protein>
<name>DIVK_BRUSI</name>
<accession>A9WYT1</accession>
<organism>
    <name type="scientific">Brucella suis (strain ATCC 23445 / NCTC 10510)</name>
    <dbReference type="NCBI Taxonomy" id="470137"/>
    <lineage>
        <taxon>Bacteria</taxon>
        <taxon>Pseudomonadati</taxon>
        <taxon>Pseudomonadota</taxon>
        <taxon>Alphaproteobacteria</taxon>
        <taxon>Hyphomicrobiales</taxon>
        <taxon>Brucellaceae</taxon>
        <taxon>Brucella/Ochrobactrum group</taxon>
        <taxon>Brucella</taxon>
    </lineage>
</organism>
<comment type="function">
    <text evidence="1">Essential protein that is involved in the control of cell division, probably through the regulation of ctrA. Its phosphorylation status is regulated by PdhS (By similarity).</text>
</comment>
<comment type="subunit">
    <text evidence="1">Interacts with DivL, PleC, DivJ and PdhS.</text>
</comment>
<comment type="subcellular location">
    <subcellularLocation>
        <location evidence="1">Cytoplasm</location>
    </subcellularLocation>
    <text evidence="1">Localized at one pole of the cell. Colocalizes with PdhS (By similarity).</text>
</comment>
<evidence type="ECO:0000250" key="1"/>
<evidence type="ECO:0000255" key="2">
    <source>
        <dbReference type="PROSITE-ProRule" id="PRU00169"/>
    </source>
</evidence>
<sequence length="123" mass="13973">MTKSVMIVEDNELNMKLFRDLIEASGYETIRTRSGLEALDLAREHHPDLILMDIQLPEVSGLEVTKWLKDDEELRHIPVIAVTAFAMKGDEERIRQGGCEAYISKPISVPRFIETIKSYLGDA</sequence>